<dbReference type="EC" id="2.7.2.8" evidence="1"/>
<dbReference type="EMBL" id="CP000058">
    <property type="protein sequence ID" value="AAZ36759.1"/>
    <property type="molecule type" value="Genomic_DNA"/>
</dbReference>
<dbReference type="RefSeq" id="WP_002551508.1">
    <property type="nucleotide sequence ID" value="NC_005773.3"/>
</dbReference>
<dbReference type="SMR" id="Q48Q08"/>
<dbReference type="GeneID" id="69857271"/>
<dbReference type="KEGG" id="psp:PSPPH_0206"/>
<dbReference type="eggNOG" id="COG0548">
    <property type="taxonomic scope" value="Bacteria"/>
</dbReference>
<dbReference type="HOGENOM" id="CLU_053680_0_0_6"/>
<dbReference type="UniPathway" id="UPA00068">
    <property type="reaction ID" value="UER00107"/>
</dbReference>
<dbReference type="Proteomes" id="UP000000551">
    <property type="component" value="Chromosome"/>
</dbReference>
<dbReference type="GO" id="GO:0005737">
    <property type="term" value="C:cytoplasm"/>
    <property type="evidence" value="ECO:0007669"/>
    <property type="project" value="UniProtKB-SubCell"/>
</dbReference>
<dbReference type="GO" id="GO:0003991">
    <property type="term" value="F:acetylglutamate kinase activity"/>
    <property type="evidence" value="ECO:0007669"/>
    <property type="project" value="UniProtKB-UniRule"/>
</dbReference>
<dbReference type="GO" id="GO:0005524">
    <property type="term" value="F:ATP binding"/>
    <property type="evidence" value="ECO:0007669"/>
    <property type="project" value="UniProtKB-UniRule"/>
</dbReference>
<dbReference type="GO" id="GO:0042450">
    <property type="term" value="P:arginine biosynthetic process via ornithine"/>
    <property type="evidence" value="ECO:0007669"/>
    <property type="project" value="UniProtKB-UniRule"/>
</dbReference>
<dbReference type="GO" id="GO:0006526">
    <property type="term" value="P:L-arginine biosynthetic process"/>
    <property type="evidence" value="ECO:0007669"/>
    <property type="project" value="UniProtKB-UniPathway"/>
</dbReference>
<dbReference type="CDD" id="cd04250">
    <property type="entry name" value="AAK_NAGK-C"/>
    <property type="match status" value="1"/>
</dbReference>
<dbReference type="FunFam" id="3.40.1160.10:FF:000004">
    <property type="entry name" value="Acetylglutamate kinase"/>
    <property type="match status" value="1"/>
</dbReference>
<dbReference type="Gene3D" id="3.40.1160.10">
    <property type="entry name" value="Acetylglutamate kinase-like"/>
    <property type="match status" value="1"/>
</dbReference>
<dbReference type="HAMAP" id="MF_00082">
    <property type="entry name" value="ArgB"/>
    <property type="match status" value="1"/>
</dbReference>
<dbReference type="InterPro" id="IPR036393">
    <property type="entry name" value="AceGlu_kinase-like_sf"/>
</dbReference>
<dbReference type="InterPro" id="IPR004662">
    <property type="entry name" value="AcgluKinase_fam"/>
</dbReference>
<dbReference type="InterPro" id="IPR037528">
    <property type="entry name" value="ArgB"/>
</dbReference>
<dbReference type="InterPro" id="IPR001048">
    <property type="entry name" value="Asp/Glu/Uridylate_kinase"/>
</dbReference>
<dbReference type="InterPro" id="IPR041727">
    <property type="entry name" value="NAGK-C"/>
</dbReference>
<dbReference type="NCBIfam" id="TIGR00761">
    <property type="entry name" value="argB"/>
    <property type="match status" value="1"/>
</dbReference>
<dbReference type="PANTHER" id="PTHR23342">
    <property type="entry name" value="N-ACETYLGLUTAMATE SYNTHASE"/>
    <property type="match status" value="1"/>
</dbReference>
<dbReference type="PANTHER" id="PTHR23342:SF0">
    <property type="entry name" value="N-ACETYLGLUTAMATE SYNTHASE, MITOCHONDRIAL"/>
    <property type="match status" value="1"/>
</dbReference>
<dbReference type="Pfam" id="PF00696">
    <property type="entry name" value="AA_kinase"/>
    <property type="match status" value="1"/>
</dbReference>
<dbReference type="PIRSF" id="PIRSF000728">
    <property type="entry name" value="NAGK"/>
    <property type="match status" value="1"/>
</dbReference>
<dbReference type="SUPFAM" id="SSF53633">
    <property type="entry name" value="Carbamate kinase-like"/>
    <property type="match status" value="1"/>
</dbReference>
<protein>
    <recommendedName>
        <fullName evidence="1">Acetylglutamate kinase</fullName>
        <ecNumber evidence="1">2.7.2.8</ecNumber>
    </recommendedName>
    <alternativeName>
        <fullName evidence="1">N-acetyl-L-glutamate 5-phosphotransferase</fullName>
    </alternativeName>
    <alternativeName>
        <fullName evidence="1">NAG kinase</fullName>
        <shortName evidence="1">NAGK</shortName>
    </alternativeName>
</protein>
<keyword id="KW-0028">Amino-acid biosynthesis</keyword>
<keyword id="KW-0055">Arginine biosynthesis</keyword>
<keyword id="KW-0067">ATP-binding</keyword>
<keyword id="KW-0963">Cytoplasm</keyword>
<keyword id="KW-0418">Kinase</keyword>
<keyword id="KW-0547">Nucleotide-binding</keyword>
<keyword id="KW-0808">Transferase</keyword>
<proteinExistence type="inferred from homology"/>
<feature type="chain" id="PRO_0000264736" description="Acetylglutamate kinase">
    <location>
        <begin position="1"/>
        <end position="301"/>
    </location>
</feature>
<feature type="binding site" evidence="1">
    <location>
        <begin position="68"/>
        <end position="69"/>
    </location>
    <ligand>
        <name>substrate</name>
    </ligand>
</feature>
<feature type="binding site" evidence="1">
    <location>
        <position position="90"/>
    </location>
    <ligand>
        <name>substrate</name>
    </ligand>
</feature>
<feature type="binding site" evidence="1">
    <location>
        <position position="195"/>
    </location>
    <ligand>
        <name>substrate</name>
    </ligand>
</feature>
<feature type="site" description="Transition state stabilizer" evidence="1">
    <location>
        <position position="33"/>
    </location>
</feature>
<feature type="site" description="Transition state stabilizer" evidence="1">
    <location>
        <position position="255"/>
    </location>
</feature>
<name>ARGB_PSE14</name>
<organism>
    <name type="scientific">Pseudomonas savastanoi pv. phaseolicola (strain 1448A / Race 6)</name>
    <name type="common">Pseudomonas syringae pv. phaseolicola (strain 1448A / Race 6)</name>
    <dbReference type="NCBI Taxonomy" id="264730"/>
    <lineage>
        <taxon>Bacteria</taxon>
        <taxon>Pseudomonadati</taxon>
        <taxon>Pseudomonadota</taxon>
        <taxon>Gammaproteobacteria</taxon>
        <taxon>Pseudomonadales</taxon>
        <taxon>Pseudomonadaceae</taxon>
        <taxon>Pseudomonas</taxon>
    </lineage>
</organism>
<gene>
    <name evidence="1" type="primary">argB</name>
    <name type="ordered locus">PSPPH_0206</name>
</gene>
<evidence type="ECO:0000255" key="1">
    <source>
        <dbReference type="HAMAP-Rule" id="MF_00082"/>
    </source>
</evidence>
<accession>Q48Q08</accession>
<reference key="1">
    <citation type="journal article" date="2005" name="J. Bacteriol.">
        <title>Whole-genome sequence analysis of Pseudomonas syringae pv. phaseolicola 1448A reveals divergence among pathovars in genes involved in virulence and transposition.</title>
        <authorList>
            <person name="Joardar V."/>
            <person name="Lindeberg M."/>
            <person name="Jackson R.W."/>
            <person name="Selengut J."/>
            <person name="Dodson R."/>
            <person name="Brinkac L.M."/>
            <person name="Daugherty S.C."/>
            <person name="DeBoy R.T."/>
            <person name="Durkin A.S."/>
            <person name="Gwinn Giglio M."/>
            <person name="Madupu R."/>
            <person name="Nelson W.C."/>
            <person name="Rosovitz M.J."/>
            <person name="Sullivan S.A."/>
            <person name="Crabtree J."/>
            <person name="Creasy T."/>
            <person name="Davidsen T.M."/>
            <person name="Haft D.H."/>
            <person name="Zafar N."/>
            <person name="Zhou L."/>
            <person name="Halpin R."/>
            <person name="Holley T."/>
            <person name="Khouri H.M."/>
            <person name="Feldblyum T.V."/>
            <person name="White O."/>
            <person name="Fraser C.M."/>
            <person name="Chatterjee A.K."/>
            <person name="Cartinhour S."/>
            <person name="Schneider D."/>
            <person name="Mansfield J.W."/>
            <person name="Collmer A."/>
            <person name="Buell R."/>
        </authorList>
    </citation>
    <scope>NUCLEOTIDE SEQUENCE [LARGE SCALE GENOMIC DNA]</scope>
    <source>
        <strain>1448A / Race 6</strain>
    </source>
</reference>
<comment type="function">
    <text evidence="1">Catalyzes the ATP-dependent phosphorylation of N-acetyl-L-glutamate.</text>
</comment>
<comment type="catalytic activity">
    <reaction evidence="1">
        <text>N-acetyl-L-glutamate + ATP = N-acetyl-L-glutamyl 5-phosphate + ADP</text>
        <dbReference type="Rhea" id="RHEA:14629"/>
        <dbReference type="ChEBI" id="CHEBI:30616"/>
        <dbReference type="ChEBI" id="CHEBI:44337"/>
        <dbReference type="ChEBI" id="CHEBI:57936"/>
        <dbReference type="ChEBI" id="CHEBI:456216"/>
        <dbReference type="EC" id="2.7.2.8"/>
    </reaction>
</comment>
<comment type="pathway">
    <text evidence="1">Amino-acid biosynthesis; L-arginine biosynthesis; N(2)-acetyl-L-ornithine from L-glutamate: step 2/4.</text>
</comment>
<comment type="subcellular location">
    <subcellularLocation>
        <location evidence="1">Cytoplasm</location>
    </subcellularLocation>
</comment>
<comment type="similarity">
    <text evidence="1">Belongs to the acetylglutamate kinase family. ArgB subfamily.</text>
</comment>
<sequence length="301" mass="31935">MTLERDAASNVAKVLSEALPYIRRFVGKTLVIKYGGNAMESEELKTGFARDIVLMKAVGINPVVVHGGGPQIGDLLKRLSIESHFIDGMRVTDAQTMDVVEMVLGGQVNKDIVNLINRHGGSAIGLTGKDAELIRAKKLTVTRQTPEMTKPEIIDIGQVGEVVGVNTGLLNMLVKGDFIPVIAPIGVGPDGESYNINADLVAGKVAEALKAEKLILLTNIAGLMNKQGEVLTGLTTEQVDGLIADGTIYGGMLPKIRCALEAVQGGVNSSHIIDGRVPNAVLLEIFTDSGVGTQITNRKRH</sequence>